<gene>
    <name type="ORF">SPAC212.06c</name>
</gene>
<keyword id="KW-1185">Reference proteome</keyword>
<organism>
    <name type="scientific">Schizosaccharomyces pombe (strain 972 / ATCC 24843)</name>
    <name type="common">Fission yeast</name>
    <dbReference type="NCBI Taxonomy" id="284812"/>
    <lineage>
        <taxon>Eukaryota</taxon>
        <taxon>Fungi</taxon>
        <taxon>Dikarya</taxon>
        <taxon>Ascomycota</taxon>
        <taxon>Taphrinomycotina</taxon>
        <taxon>Schizosaccharomycetes</taxon>
        <taxon>Schizosaccharomycetales</taxon>
        <taxon>Schizosaccharomycetaceae</taxon>
        <taxon>Schizosaccharomyces</taxon>
    </lineage>
</organism>
<protein>
    <recommendedName>
        <fullName>Truncated RecQ DNA helicase-like protein C212.06c</fullName>
    </recommendedName>
</protein>
<sequence length="147" mass="15972">MGVRLVVHYRLPASSMDYVQETGRAGRDGKYAIAALFYEKYDSTWSSYVEDSMKNFLNDNTMCVRSFLASEMDGECVCYSLLGEESTVSTMYGVKPTLPETPKPAIATHSRYNASFSSSPPPQPGSSSGMSAMNTNTTSTTPVSGKT</sequence>
<accession>G2TRN7</accession>
<reference key="1">
    <citation type="journal article" date="2002" name="Nature">
        <title>The genome sequence of Schizosaccharomyces pombe.</title>
        <authorList>
            <person name="Wood V."/>
            <person name="Gwilliam R."/>
            <person name="Rajandream M.A."/>
            <person name="Lyne M.H."/>
            <person name="Lyne R."/>
            <person name="Stewart A."/>
            <person name="Sgouros J.G."/>
            <person name="Peat N."/>
            <person name="Hayles J."/>
            <person name="Baker S.G."/>
            <person name="Basham D."/>
            <person name="Bowman S."/>
            <person name="Brooks K."/>
            <person name="Brown D."/>
            <person name="Brown S."/>
            <person name="Chillingworth T."/>
            <person name="Churcher C.M."/>
            <person name="Collins M."/>
            <person name="Connor R."/>
            <person name="Cronin A."/>
            <person name="Davis P."/>
            <person name="Feltwell T."/>
            <person name="Fraser A."/>
            <person name="Gentles S."/>
            <person name="Goble A."/>
            <person name="Hamlin N."/>
            <person name="Harris D.E."/>
            <person name="Hidalgo J."/>
            <person name="Hodgson G."/>
            <person name="Holroyd S."/>
            <person name="Hornsby T."/>
            <person name="Howarth S."/>
            <person name="Huckle E.J."/>
            <person name="Hunt S."/>
            <person name="Jagels K."/>
            <person name="James K.D."/>
            <person name="Jones L."/>
            <person name="Jones M."/>
            <person name="Leather S."/>
            <person name="McDonald S."/>
            <person name="McLean J."/>
            <person name="Mooney P."/>
            <person name="Moule S."/>
            <person name="Mungall K.L."/>
            <person name="Murphy L.D."/>
            <person name="Niblett D."/>
            <person name="Odell C."/>
            <person name="Oliver K."/>
            <person name="O'Neil S."/>
            <person name="Pearson D."/>
            <person name="Quail M.A."/>
            <person name="Rabbinowitsch E."/>
            <person name="Rutherford K.M."/>
            <person name="Rutter S."/>
            <person name="Saunders D."/>
            <person name="Seeger K."/>
            <person name="Sharp S."/>
            <person name="Skelton J."/>
            <person name="Simmonds M.N."/>
            <person name="Squares R."/>
            <person name="Squares S."/>
            <person name="Stevens K."/>
            <person name="Taylor K."/>
            <person name="Taylor R.G."/>
            <person name="Tivey A."/>
            <person name="Walsh S.V."/>
            <person name="Warren T."/>
            <person name="Whitehead S."/>
            <person name="Woodward J.R."/>
            <person name="Volckaert G."/>
            <person name="Aert R."/>
            <person name="Robben J."/>
            <person name="Grymonprez B."/>
            <person name="Weltjens I."/>
            <person name="Vanstreels E."/>
            <person name="Rieger M."/>
            <person name="Schaefer M."/>
            <person name="Mueller-Auer S."/>
            <person name="Gabel C."/>
            <person name="Fuchs M."/>
            <person name="Duesterhoeft A."/>
            <person name="Fritzc C."/>
            <person name="Holzer E."/>
            <person name="Moestl D."/>
            <person name="Hilbert H."/>
            <person name="Borzym K."/>
            <person name="Langer I."/>
            <person name="Beck A."/>
            <person name="Lehrach H."/>
            <person name="Reinhardt R."/>
            <person name="Pohl T.M."/>
            <person name="Eger P."/>
            <person name="Zimmermann W."/>
            <person name="Wedler H."/>
            <person name="Wambutt R."/>
            <person name="Purnelle B."/>
            <person name="Goffeau A."/>
            <person name="Cadieu E."/>
            <person name="Dreano S."/>
            <person name="Gloux S."/>
            <person name="Lelaure V."/>
            <person name="Mottier S."/>
            <person name="Galibert F."/>
            <person name="Aves S.J."/>
            <person name="Xiang Z."/>
            <person name="Hunt C."/>
            <person name="Moore K."/>
            <person name="Hurst S.M."/>
            <person name="Lucas M."/>
            <person name="Rochet M."/>
            <person name="Gaillardin C."/>
            <person name="Tallada V.A."/>
            <person name="Garzon A."/>
            <person name="Thode G."/>
            <person name="Daga R.R."/>
            <person name="Cruzado L."/>
            <person name="Jimenez J."/>
            <person name="Sanchez M."/>
            <person name="del Rey F."/>
            <person name="Benito J."/>
            <person name="Dominguez A."/>
            <person name="Revuelta J.L."/>
            <person name="Moreno S."/>
            <person name="Armstrong J."/>
            <person name="Forsburg S.L."/>
            <person name="Cerutti L."/>
            <person name="Lowe T."/>
            <person name="McCombie W.R."/>
            <person name="Paulsen I."/>
            <person name="Potashkin J."/>
            <person name="Shpakovski G.V."/>
            <person name="Ussery D."/>
            <person name="Barrell B.G."/>
            <person name="Nurse P."/>
        </authorList>
    </citation>
    <scope>NUCLEOTIDE SEQUENCE [LARGE SCALE GENOMIC DNA]</scope>
    <source>
        <strain>972 / ATCC 24843</strain>
    </source>
</reference>
<reference key="2">
    <citation type="journal article" date="2011" name="Science">
        <title>Comparative functional genomics of the fission yeasts.</title>
        <authorList>
            <person name="Rhind N."/>
            <person name="Chen Z."/>
            <person name="Yassour M."/>
            <person name="Thompson D.A."/>
            <person name="Haas B.J."/>
            <person name="Habib N."/>
            <person name="Wapinski I."/>
            <person name="Roy S."/>
            <person name="Lin M.F."/>
            <person name="Heiman D.I."/>
            <person name="Young S.K."/>
            <person name="Furuya K."/>
            <person name="Guo Y."/>
            <person name="Pidoux A."/>
            <person name="Chen H.M."/>
            <person name="Robbertse B."/>
            <person name="Goldberg J.M."/>
            <person name="Aoki K."/>
            <person name="Bayne E.H."/>
            <person name="Berlin A.M."/>
            <person name="Desjardins C.A."/>
            <person name="Dobbs E."/>
            <person name="Dukaj L."/>
            <person name="Fan L."/>
            <person name="FitzGerald M.G."/>
            <person name="French C."/>
            <person name="Gujja S."/>
            <person name="Hansen K."/>
            <person name="Keifenheim D."/>
            <person name="Levin J.Z."/>
            <person name="Mosher R.A."/>
            <person name="Mueller C.A."/>
            <person name="Pfiffner J."/>
            <person name="Priest M."/>
            <person name="Russ C."/>
            <person name="Smialowska A."/>
            <person name="Swoboda P."/>
            <person name="Sykes S.M."/>
            <person name="Vaughn M."/>
            <person name="Vengrova S."/>
            <person name="Yoder R."/>
            <person name="Zeng Q."/>
            <person name="Allshire R."/>
            <person name="Baulcombe D."/>
            <person name="Birren B.W."/>
            <person name="Brown W."/>
            <person name="Ekwall K."/>
            <person name="Kellis M."/>
            <person name="Leatherwood J."/>
            <person name="Levin H."/>
            <person name="Margalit H."/>
            <person name="Martienssen R."/>
            <person name="Nieduszynski C.A."/>
            <person name="Spatafora J.W."/>
            <person name="Friedman N."/>
            <person name="Dalgaard J.Z."/>
            <person name="Baumann P."/>
            <person name="Niki H."/>
            <person name="Regev A."/>
            <person name="Nusbaum C."/>
        </authorList>
    </citation>
    <scope>REVISION OF GENE MODEL</scope>
</reference>
<dbReference type="EMBL" id="CU329670">
    <property type="protein sequence ID" value="CAO77631.2"/>
    <property type="molecule type" value="Genomic_DNA"/>
</dbReference>
<dbReference type="RefSeq" id="XP_004001758.1">
    <property type="nucleotide sequence ID" value="XM_004001709.1"/>
</dbReference>
<dbReference type="SMR" id="G2TRN7"/>
<dbReference type="BioGRID" id="280451">
    <property type="interactions" value="26"/>
</dbReference>
<dbReference type="STRING" id="284812.G2TRN7"/>
<dbReference type="PaxDb" id="4896-SPAC212.06c.1"/>
<dbReference type="EnsemblFungi" id="SPAC212.06c.1">
    <property type="protein sequence ID" value="SPAC212.06c.1:pep"/>
    <property type="gene ID" value="SPAC212.06c"/>
</dbReference>
<dbReference type="PomBase" id="SPAC212.06c"/>
<dbReference type="VEuPathDB" id="FungiDB:SPAC212.06c"/>
<dbReference type="eggNOG" id="KOG0351">
    <property type="taxonomic scope" value="Eukaryota"/>
</dbReference>
<dbReference type="HOGENOM" id="CLU_1769194_0_0_1"/>
<dbReference type="InParanoid" id="G2TRN7"/>
<dbReference type="PRO" id="PR:G2TRN7"/>
<dbReference type="Proteomes" id="UP000002485">
    <property type="component" value="Chromosome I"/>
</dbReference>
<dbReference type="Gene3D" id="3.40.50.300">
    <property type="entry name" value="P-loop containing nucleotide triphosphate hydrolases"/>
    <property type="match status" value="1"/>
</dbReference>
<dbReference type="InterPro" id="IPR027417">
    <property type="entry name" value="P-loop_NTPase"/>
</dbReference>
<dbReference type="PANTHER" id="PTHR13710:SF149">
    <property type="entry name" value="ATP-DEPENDENT DNA HELICASE TLH2"/>
    <property type="match status" value="1"/>
</dbReference>
<dbReference type="PANTHER" id="PTHR13710">
    <property type="entry name" value="DNA HELICASE RECQ FAMILY MEMBER"/>
    <property type="match status" value="1"/>
</dbReference>
<dbReference type="SUPFAM" id="SSF52540">
    <property type="entry name" value="P-loop containing nucleoside triphosphate hydrolases"/>
    <property type="match status" value="1"/>
</dbReference>
<feature type="chain" id="PRO_0000416670" description="Truncated RecQ DNA helicase-like protein C212.06c">
    <location>
        <begin position="1"/>
        <end position="147"/>
    </location>
</feature>
<feature type="domain" description="Helicase C-terminal">
    <location>
        <begin position="1"/>
        <end position="72"/>
    </location>
</feature>
<feature type="region of interest" description="Disordered" evidence="2">
    <location>
        <begin position="100"/>
        <end position="147"/>
    </location>
</feature>
<feature type="compositionally biased region" description="Low complexity" evidence="2">
    <location>
        <begin position="125"/>
        <end position="141"/>
    </location>
</feature>
<proteinExistence type="inferred from homology"/>
<name>YM06_SCHPO</name>
<evidence type="ECO:0000250" key="1"/>
<evidence type="ECO:0000256" key="2">
    <source>
        <dbReference type="SAM" id="MobiDB-lite"/>
    </source>
</evidence>
<evidence type="ECO:0000305" key="3"/>
<comment type="function">
    <text evidence="1">Truncated ATP-dependent 3'-5' DNA helicase.</text>
</comment>
<comment type="similarity">
    <text evidence="3">Belongs to the helicase family. RecQ subfamily.</text>
</comment>
<comment type="caution">
    <text evidence="3">Is probably not a functional DNA helicase since the N-ter is truncated and missing the ATP-binding domain.</text>
</comment>